<organism>
    <name type="scientific">Sapajus apella</name>
    <name type="common">Brown-capped capuchin</name>
    <name type="synonym">Cebus apella</name>
    <dbReference type="NCBI Taxonomy" id="9515"/>
    <lineage>
        <taxon>Eukaryota</taxon>
        <taxon>Metazoa</taxon>
        <taxon>Chordata</taxon>
        <taxon>Craniata</taxon>
        <taxon>Vertebrata</taxon>
        <taxon>Euteleostomi</taxon>
        <taxon>Mammalia</taxon>
        <taxon>Eutheria</taxon>
        <taxon>Euarchontoglires</taxon>
        <taxon>Primates</taxon>
        <taxon>Haplorrhini</taxon>
        <taxon>Platyrrhini</taxon>
        <taxon>Cebidae</taxon>
        <taxon>Cebinae</taxon>
        <taxon>Sapajus</taxon>
    </lineage>
</organism>
<comment type="function">
    <text evidence="2">Catalyzes the reduction of hydroperoxides in a glutathione-dependent manner thus regulating cellular redox homeostasis. Can reduce small soluble hydroperoxides such as H2O2, cumene hydroperoxide and tert-butyl hydroperoxide, as well as several fatty acid-derived hydroperoxides. Cannot reduce phosphatidycholine hydroperoxide.</text>
</comment>
<comment type="catalytic activity">
    <reaction evidence="2">
        <text>2 glutathione + H2O2 = glutathione disulfide + 2 H2O</text>
        <dbReference type="Rhea" id="RHEA:16833"/>
        <dbReference type="ChEBI" id="CHEBI:15377"/>
        <dbReference type="ChEBI" id="CHEBI:16240"/>
        <dbReference type="ChEBI" id="CHEBI:57925"/>
        <dbReference type="ChEBI" id="CHEBI:58297"/>
        <dbReference type="EC" id="1.11.1.9"/>
    </reaction>
    <physiologicalReaction direction="left-to-right" evidence="2">
        <dbReference type="Rhea" id="RHEA:16834"/>
    </physiologicalReaction>
</comment>
<comment type="catalytic activity">
    <reaction evidence="2">
        <text>a hydroperoxy polyunsaturated fatty acid + 2 glutathione = a hydroxy polyunsaturated fatty acid + glutathione disulfide + H2O</text>
        <dbReference type="Rhea" id="RHEA:19057"/>
        <dbReference type="ChEBI" id="CHEBI:15377"/>
        <dbReference type="ChEBI" id="CHEBI:57925"/>
        <dbReference type="ChEBI" id="CHEBI:58297"/>
        <dbReference type="ChEBI" id="CHEBI:131871"/>
        <dbReference type="ChEBI" id="CHEBI:134019"/>
        <dbReference type="EC" id="1.11.1.12"/>
    </reaction>
    <physiologicalReaction direction="left-to-right" evidence="2">
        <dbReference type="Rhea" id="RHEA:19058"/>
    </physiologicalReaction>
</comment>
<comment type="catalytic activity">
    <reaction evidence="2">
        <text>tert-butyl hydroperoxide + 2 glutathione = tert-butanol + glutathione disulfide + H2O</text>
        <dbReference type="Rhea" id="RHEA:69412"/>
        <dbReference type="ChEBI" id="CHEBI:15377"/>
        <dbReference type="ChEBI" id="CHEBI:45895"/>
        <dbReference type="ChEBI" id="CHEBI:57925"/>
        <dbReference type="ChEBI" id="CHEBI:58297"/>
        <dbReference type="ChEBI" id="CHEBI:64090"/>
    </reaction>
    <physiologicalReaction direction="left-to-right" evidence="2">
        <dbReference type="Rhea" id="RHEA:69413"/>
    </physiologicalReaction>
</comment>
<comment type="catalytic activity">
    <reaction evidence="2">
        <text>cumene hydroperoxide + 2 glutathione = 2-phenylpropan-2-ol + glutathione disulfide + H2O</text>
        <dbReference type="Rhea" id="RHEA:69651"/>
        <dbReference type="ChEBI" id="CHEBI:15377"/>
        <dbReference type="ChEBI" id="CHEBI:57925"/>
        <dbReference type="ChEBI" id="CHEBI:58297"/>
        <dbReference type="ChEBI" id="CHEBI:78673"/>
        <dbReference type="ChEBI" id="CHEBI:131607"/>
    </reaction>
    <physiologicalReaction direction="left-to-right" evidence="2">
        <dbReference type="Rhea" id="RHEA:69652"/>
    </physiologicalReaction>
</comment>
<comment type="catalytic activity">
    <reaction evidence="2">
        <text>(13S)-hydroperoxy-(9Z,11E)-octadecadienoate + 2 glutathione = (13S)-hydroxy-(9Z,11E)-octadecadienoate + glutathione disulfide + H2O</text>
        <dbReference type="Rhea" id="RHEA:48888"/>
        <dbReference type="ChEBI" id="CHEBI:15377"/>
        <dbReference type="ChEBI" id="CHEBI:57466"/>
        <dbReference type="ChEBI" id="CHEBI:57925"/>
        <dbReference type="ChEBI" id="CHEBI:58297"/>
        <dbReference type="ChEBI" id="CHEBI:90850"/>
    </reaction>
    <physiologicalReaction direction="left-to-right" evidence="2">
        <dbReference type="Rhea" id="RHEA:48889"/>
    </physiologicalReaction>
</comment>
<comment type="catalytic activity">
    <reaction evidence="2">
        <text>(5S)-hydroperoxy-(6E,8Z,11Z,14Z)-eicosatetraenoate + 2 glutathione = (5S)-hydroxy-(6E,8Z,11Z,14Z)-eicosatetraenoate + glutathione disulfide + H2O</text>
        <dbReference type="Rhea" id="RHEA:48620"/>
        <dbReference type="ChEBI" id="CHEBI:15377"/>
        <dbReference type="ChEBI" id="CHEBI:57450"/>
        <dbReference type="ChEBI" id="CHEBI:57925"/>
        <dbReference type="ChEBI" id="CHEBI:58297"/>
        <dbReference type="ChEBI" id="CHEBI:90632"/>
    </reaction>
    <physiologicalReaction direction="left-to-right" evidence="2">
        <dbReference type="Rhea" id="RHEA:48621"/>
    </physiologicalReaction>
</comment>
<comment type="catalytic activity">
    <reaction evidence="2">
        <text>(12R)-hydroperoxy-(5Z,8Z,10E,14Z)-eicosatetraenoate + 2 glutathione = (12R)-hydroxy-(5Z,8Z,10E,14Z)-eicosatetraenoate + glutathione disulfide + H2O</text>
        <dbReference type="Rhea" id="RHEA:76691"/>
        <dbReference type="ChEBI" id="CHEBI:15377"/>
        <dbReference type="ChEBI" id="CHEBI:57925"/>
        <dbReference type="ChEBI" id="CHEBI:58297"/>
        <dbReference type="ChEBI" id="CHEBI:75230"/>
        <dbReference type="ChEBI" id="CHEBI:83343"/>
    </reaction>
    <physiologicalReaction direction="left-to-right" evidence="2">
        <dbReference type="Rhea" id="RHEA:76692"/>
    </physiologicalReaction>
</comment>
<comment type="catalytic activity">
    <reaction evidence="2">
        <text>(15S)-hydroperoxy-(5Z,8Z,11Z,13E)-eicosatetraenoate + 2 glutathione = (15S)-hydroxy-(5Z,8Z,11Z,13E)-eicosatetraenoate + glutathione disulfide + H2O</text>
        <dbReference type="Rhea" id="RHEA:76695"/>
        <dbReference type="ChEBI" id="CHEBI:15377"/>
        <dbReference type="ChEBI" id="CHEBI:57409"/>
        <dbReference type="ChEBI" id="CHEBI:57446"/>
        <dbReference type="ChEBI" id="CHEBI:57925"/>
        <dbReference type="ChEBI" id="CHEBI:58297"/>
    </reaction>
    <physiologicalReaction direction="left-to-right" evidence="2">
        <dbReference type="Rhea" id="RHEA:76696"/>
    </physiologicalReaction>
</comment>
<comment type="subunit">
    <text evidence="2">Homotetramer.</text>
</comment>
<comment type="subcellular location">
    <subcellularLocation>
        <location evidence="2">Cytoplasm</location>
        <location evidence="2">Cytosol</location>
    </subcellularLocation>
</comment>
<comment type="similarity">
    <text evidence="3">Belongs to the glutathione peroxidase family.</text>
</comment>
<gene>
    <name type="primary">GPX2</name>
</gene>
<feature type="chain" id="PRO_0000066618" description="Glutathione peroxidase 2">
    <location>
        <begin position="1"/>
        <end position="190"/>
    </location>
</feature>
<feature type="active site" evidence="1">
    <location>
        <position position="40"/>
    </location>
</feature>
<feature type="non-standard amino acid" description="Selenocysteine" evidence="1">
    <location>
        <position position="40"/>
    </location>
</feature>
<reference key="1">
    <citation type="journal article" date="2005" name="Comp. Biochem. Physiol.">
        <title>Structure, gene expression, and evolution of primate glutathione peroxidases.</title>
        <authorList>
            <person name="Fukuhara R."/>
            <person name="Kageyama T."/>
        </authorList>
    </citation>
    <scope>NUCLEOTIDE SEQUENCE [MRNA]</scope>
</reference>
<keyword id="KW-0963">Cytoplasm</keyword>
<keyword id="KW-0560">Oxidoreductase</keyword>
<keyword id="KW-0575">Peroxidase</keyword>
<keyword id="KW-1185">Reference proteome</keyword>
<keyword id="KW-0712">Selenocysteine</keyword>
<dbReference type="EC" id="1.11.1.9" evidence="2"/>
<dbReference type="EC" id="1.11.1.12" evidence="2"/>
<dbReference type="EMBL" id="AB121004">
    <property type="protein sequence ID" value="BAE17013.1"/>
    <property type="molecule type" value="mRNA"/>
</dbReference>
<dbReference type="PeroxiBase" id="3639">
    <property type="entry name" value="CapGPx02"/>
</dbReference>
<dbReference type="Proteomes" id="UP000504640">
    <property type="component" value="Unplaced"/>
</dbReference>
<dbReference type="GO" id="GO:0005829">
    <property type="term" value="C:cytosol"/>
    <property type="evidence" value="ECO:0007669"/>
    <property type="project" value="UniProtKB-SubCell"/>
</dbReference>
<dbReference type="GO" id="GO:0004602">
    <property type="term" value="F:glutathione peroxidase activity"/>
    <property type="evidence" value="ECO:0000250"/>
    <property type="project" value="UniProtKB"/>
</dbReference>
<dbReference type="GO" id="GO:0047066">
    <property type="term" value="F:phospholipid-hydroperoxide glutathione peroxidase activity"/>
    <property type="evidence" value="ECO:0007669"/>
    <property type="project" value="RHEA"/>
</dbReference>
<dbReference type="GO" id="GO:0006979">
    <property type="term" value="P:response to oxidative stress"/>
    <property type="evidence" value="ECO:0007669"/>
    <property type="project" value="InterPro"/>
</dbReference>
<dbReference type="CDD" id="cd00340">
    <property type="entry name" value="GSH_Peroxidase"/>
    <property type="match status" value="1"/>
</dbReference>
<dbReference type="FunFam" id="3.40.30.10:FF:000153">
    <property type="entry name" value="Glutathione peroxidase"/>
    <property type="match status" value="1"/>
</dbReference>
<dbReference type="Gene3D" id="3.40.30.10">
    <property type="entry name" value="Glutaredoxin"/>
    <property type="match status" value="1"/>
</dbReference>
<dbReference type="InterPro" id="IPR000889">
    <property type="entry name" value="Glutathione_peroxidase"/>
</dbReference>
<dbReference type="InterPro" id="IPR029759">
    <property type="entry name" value="GPX_AS"/>
</dbReference>
<dbReference type="InterPro" id="IPR029760">
    <property type="entry name" value="GPX_CS"/>
</dbReference>
<dbReference type="InterPro" id="IPR036249">
    <property type="entry name" value="Thioredoxin-like_sf"/>
</dbReference>
<dbReference type="PANTHER" id="PTHR11592">
    <property type="entry name" value="GLUTATHIONE PEROXIDASE"/>
    <property type="match status" value="1"/>
</dbReference>
<dbReference type="PANTHER" id="PTHR11592:SF36">
    <property type="entry name" value="GLUTATHIONE PEROXIDASE 2"/>
    <property type="match status" value="1"/>
</dbReference>
<dbReference type="Pfam" id="PF00255">
    <property type="entry name" value="GSHPx"/>
    <property type="match status" value="1"/>
</dbReference>
<dbReference type="PIRSF" id="PIRSF000303">
    <property type="entry name" value="Glutathion_perox"/>
    <property type="match status" value="1"/>
</dbReference>
<dbReference type="PRINTS" id="PR01011">
    <property type="entry name" value="GLUTPROXDASE"/>
</dbReference>
<dbReference type="SUPFAM" id="SSF52833">
    <property type="entry name" value="Thioredoxin-like"/>
    <property type="match status" value="1"/>
</dbReference>
<dbReference type="PROSITE" id="PS00460">
    <property type="entry name" value="GLUTATHIONE_PEROXID_1"/>
    <property type="match status" value="1"/>
</dbReference>
<dbReference type="PROSITE" id="PS00763">
    <property type="entry name" value="GLUTATHIONE_PEROXID_2"/>
    <property type="match status" value="1"/>
</dbReference>
<dbReference type="PROSITE" id="PS51355">
    <property type="entry name" value="GLUTATHIONE_PEROXID_3"/>
    <property type="match status" value="1"/>
</dbReference>
<name>GPX2_SAPAP</name>
<accession>Q4AEH7</accession>
<proteinExistence type="evidence at transcript level"/>
<evidence type="ECO:0000250" key="1">
    <source>
        <dbReference type="UniProtKB" id="O70325"/>
    </source>
</evidence>
<evidence type="ECO:0000250" key="2">
    <source>
        <dbReference type="UniProtKB" id="P18283"/>
    </source>
</evidence>
<evidence type="ECO:0000305" key="3"/>
<protein>
    <recommendedName>
        <fullName>Glutathione peroxidase 2</fullName>
        <shortName>GPx-2</shortName>
        <shortName>GSHPx-2</shortName>
        <ecNumber evidence="2">1.11.1.9</ecNumber>
    </recommendedName>
    <alternativeName>
        <fullName>Glutathione peroxidase-gastrointestinal</fullName>
        <shortName>GPx-GI</shortName>
        <shortName>GSHPx-GI</shortName>
    </alternativeName>
    <alternativeName>
        <fullName>Phospholipid hydroperoxide glutathione peroxidase GPX2</fullName>
        <ecNumber evidence="2">1.11.1.12</ecNumber>
    </alternativeName>
</protein>
<sequence length="190" mass="21909">MAFIAKSFYDLSAISLDGEKVDFNTFRGRAVLIENVASLUGTTTRDFTQLNELQCRFPRRLVVLGFPCNQFGHQENCQNEEILNSLKYVRPGGGYQPTFTLVQKCEVNGQNEHPVFAYLKDKLPYPHDDPFSLMTDPKFIIWSPVCRSDVAWNFEKFLIGPEGEPFRRYSRTFPTINIEPDIKRLLKVAI</sequence>